<proteinExistence type="inferred from homology"/>
<accession>Q2JTG8</accession>
<feature type="chain" id="PRO_0000347841" description="Alanine--tRNA ligase">
    <location>
        <begin position="1"/>
        <end position="883"/>
    </location>
</feature>
<feature type="binding site" evidence="1">
    <location>
        <position position="564"/>
    </location>
    <ligand>
        <name>Zn(2+)</name>
        <dbReference type="ChEBI" id="CHEBI:29105"/>
    </ligand>
</feature>
<feature type="binding site" evidence="1">
    <location>
        <position position="568"/>
    </location>
    <ligand>
        <name>Zn(2+)</name>
        <dbReference type="ChEBI" id="CHEBI:29105"/>
    </ligand>
</feature>
<feature type="binding site" evidence="1">
    <location>
        <position position="666"/>
    </location>
    <ligand>
        <name>Zn(2+)</name>
        <dbReference type="ChEBI" id="CHEBI:29105"/>
    </ligand>
</feature>
<feature type="binding site" evidence="1">
    <location>
        <position position="670"/>
    </location>
    <ligand>
        <name>Zn(2+)</name>
        <dbReference type="ChEBI" id="CHEBI:29105"/>
    </ligand>
</feature>
<gene>
    <name evidence="1" type="primary">alaS</name>
    <name type="ordered locus">CYA_1881</name>
</gene>
<sequence>MSPSFSGAAIRQAFLDFYAQRGHQVLPSASLVPEDPTVLLTIAGMLPFKPIFLGHQDPQYPRVTTAQKCVRTNDIENVGRTARHHTFFEMLGNFSFGDYFKKEAITWAWELVTEVFGLPPERLVVSVFREDEEAFALWRDAIGIPPHRIRRMGEEDNFWAAGPTGPCGPCSEIYYDFKPELGDEQIDLGDDSRFLEIYNLVFMELNRDSEGRLTPLARQNIDTGLGLERLAQVLQGVPNNYETDLIFPIVQKAAEIARVDYFQASPEQKVSLKVIGDHARAVMHLIADGVIPSNVDRGYVLRRLIRRMVRHGRLLGIGEPFTLPVVETAIQLAEAAYPEVREREAVIKAELQREEEQFLKTLERGERLLFDLFANVTASGAPKQISGADAFKLFDTYGFPLELTQEIAQERGFSVDVQGFEQEMEKQRQRARAAHQTLDVTAQGSLDELAEFLIETEFLGYSQSSARGVVEALLVEGKSVPQVEAGQSVQVVLDRTPFYAESGGQIGDRGYLAGDGVLVRVEDVQKRGDLFVHFGWVERGILRVGDPVQAQIDLACRRRAQAHHTATHLLQAALKKVVDPSISQAGSLVAFDRLRFDFTLSRPLTPEELQQVEDLVNTWIAEAHPAQVSIMPLAEAKARGAIAMFGEKYGAEVRVVDFPGVSMELCGGTHVSNTAEIGLFKIISESGVAAGIRRIEAVAGPAVLEYLNERDSVVRELSAQFKAKPQEIPERVAALQAELKAAQRALEEARSQLALLQAERLLPQAVAVGNLQILAAELGSTPPEALKTAAEHLLHKLGEGAVVLGSVPEAGKVSLVAAFSPAVQKLGLKAGSFIGEIAKLTGGGGGGRPNLAQAGGKQPEKLAQALQVAQERLQAELSSGLGS</sequence>
<organism>
    <name type="scientific">Synechococcus sp. (strain JA-3-3Ab)</name>
    <name type="common">Cyanobacteria bacterium Yellowstone A-Prime</name>
    <dbReference type="NCBI Taxonomy" id="321327"/>
    <lineage>
        <taxon>Bacteria</taxon>
        <taxon>Bacillati</taxon>
        <taxon>Cyanobacteriota</taxon>
        <taxon>Cyanophyceae</taxon>
        <taxon>Synechococcales</taxon>
        <taxon>Synechococcaceae</taxon>
        <taxon>Synechococcus</taxon>
    </lineage>
</organism>
<evidence type="ECO:0000255" key="1">
    <source>
        <dbReference type="HAMAP-Rule" id="MF_00036"/>
    </source>
</evidence>
<comment type="function">
    <text evidence="1">Catalyzes the attachment of alanine to tRNA(Ala) in a two-step reaction: alanine is first activated by ATP to form Ala-AMP and then transferred to the acceptor end of tRNA(Ala). Also edits incorrectly charged Ser-tRNA(Ala) and Gly-tRNA(Ala) via its editing domain.</text>
</comment>
<comment type="catalytic activity">
    <reaction evidence="1">
        <text>tRNA(Ala) + L-alanine + ATP = L-alanyl-tRNA(Ala) + AMP + diphosphate</text>
        <dbReference type="Rhea" id="RHEA:12540"/>
        <dbReference type="Rhea" id="RHEA-COMP:9657"/>
        <dbReference type="Rhea" id="RHEA-COMP:9923"/>
        <dbReference type="ChEBI" id="CHEBI:30616"/>
        <dbReference type="ChEBI" id="CHEBI:33019"/>
        <dbReference type="ChEBI" id="CHEBI:57972"/>
        <dbReference type="ChEBI" id="CHEBI:78442"/>
        <dbReference type="ChEBI" id="CHEBI:78497"/>
        <dbReference type="ChEBI" id="CHEBI:456215"/>
        <dbReference type="EC" id="6.1.1.7"/>
    </reaction>
</comment>
<comment type="cofactor">
    <cofactor evidence="1">
        <name>Zn(2+)</name>
        <dbReference type="ChEBI" id="CHEBI:29105"/>
    </cofactor>
    <text evidence="1">Binds 1 zinc ion per subunit.</text>
</comment>
<comment type="subcellular location">
    <subcellularLocation>
        <location evidence="1">Cytoplasm</location>
    </subcellularLocation>
</comment>
<comment type="domain">
    <text evidence="1">Consists of three domains; the N-terminal catalytic domain, the editing domain and the C-terminal C-Ala domain. The editing domain removes incorrectly charged amino acids, while the C-Ala domain, along with tRNA(Ala), serves as a bridge to cooperatively bring together the editing and aminoacylation centers thus stimulating deacylation of misacylated tRNAs.</text>
</comment>
<comment type="similarity">
    <text evidence="1">Belongs to the class-II aminoacyl-tRNA synthetase family.</text>
</comment>
<protein>
    <recommendedName>
        <fullName evidence="1">Alanine--tRNA ligase</fullName>
        <ecNumber evidence="1">6.1.1.7</ecNumber>
    </recommendedName>
    <alternativeName>
        <fullName evidence="1">Alanyl-tRNA synthetase</fullName>
        <shortName evidence="1">AlaRS</shortName>
    </alternativeName>
</protein>
<name>SYA_SYNJA</name>
<keyword id="KW-0030">Aminoacyl-tRNA synthetase</keyword>
<keyword id="KW-0067">ATP-binding</keyword>
<keyword id="KW-0963">Cytoplasm</keyword>
<keyword id="KW-0436">Ligase</keyword>
<keyword id="KW-0479">Metal-binding</keyword>
<keyword id="KW-0547">Nucleotide-binding</keyword>
<keyword id="KW-0648">Protein biosynthesis</keyword>
<keyword id="KW-0694">RNA-binding</keyword>
<keyword id="KW-0820">tRNA-binding</keyword>
<keyword id="KW-0862">Zinc</keyword>
<reference key="1">
    <citation type="journal article" date="2007" name="ISME J.">
        <title>Population level functional diversity in a microbial community revealed by comparative genomic and metagenomic analyses.</title>
        <authorList>
            <person name="Bhaya D."/>
            <person name="Grossman A.R."/>
            <person name="Steunou A.-S."/>
            <person name="Khuri N."/>
            <person name="Cohan F.M."/>
            <person name="Hamamura N."/>
            <person name="Melendrez M.C."/>
            <person name="Bateson M.M."/>
            <person name="Ward D.M."/>
            <person name="Heidelberg J.F."/>
        </authorList>
    </citation>
    <scope>NUCLEOTIDE SEQUENCE [LARGE SCALE GENOMIC DNA]</scope>
    <source>
        <strain>JA-3-3Ab</strain>
    </source>
</reference>
<dbReference type="EC" id="6.1.1.7" evidence="1"/>
<dbReference type="EMBL" id="CP000239">
    <property type="protein sequence ID" value="ABD00029.1"/>
    <property type="molecule type" value="Genomic_DNA"/>
</dbReference>
<dbReference type="RefSeq" id="WP_011430704.1">
    <property type="nucleotide sequence ID" value="NC_007775.1"/>
</dbReference>
<dbReference type="SMR" id="Q2JTG8"/>
<dbReference type="STRING" id="321327.CYA_1881"/>
<dbReference type="KEGG" id="cya:CYA_1881"/>
<dbReference type="eggNOG" id="COG0013">
    <property type="taxonomic scope" value="Bacteria"/>
</dbReference>
<dbReference type="HOGENOM" id="CLU_004485_1_1_3"/>
<dbReference type="OrthoDB" id="9803884at2"/>
<dbReference type="Proteomes" id="UP000008818">
    <property type="component" value="Chromosome"/>
</dbReference>
<dbReference type="GO" id="GO:0005829">
    <property type="term" value="C:cytosol"/>
    <property type="evidence" value="ECO:0007669"/>
    <property type="project" value="TreeGrafter"/>
</dbReference>
<dbReference type="GO" id="GO:0004813">
    <property type="term" value="F:alanine-tRNA ligase activity"/>
    <property type="evidence" value="ECO:0007669"/>
    <property type="project" value="UniProtKB-UniRule"/>
</dbReference>
<dbReference type="GO" id="GO:0002161">
    <property type="term" value="F:aminoacyl-tRNA deacylase activity"/>
    <property type="evidence" value="ECO:0007669"/>
    <property type="project" value="TreeGrafter"/>
</dbReference>
<dbReference type="GO" id="GO:0005524">
    <property type="term" value="F:ATP binding"/>
    <property type="evidence" value="ECO:0007669"/>
    <property type="project" value="UniProtKB-UniRule"/>
</dbReference>
<dbReference type="GO" id="GO:0000049">
    <property type="term" value="F:tRNA binding"/>
    <property type="evidence" value="ECO:0007669"/>
    <property type="project" value="UniProtKB-KW"/>
</dbReference>
<dbReference type="GO" id="GO:0008270">
    <property type="term" value="F:zinc ion binding"/>
    <property type="evidence" value="ECO:0007669"/>
    <property type="project" value="UniProtKB-UniRule"/>
</dbReference>
<dbReference type="GO" id="GO:0006419">
    <property type="term" value="P:alanyl-tRNA aminoacylation"/>
    <property type="evidence" value="ECO:0007669"/>
    <property type="project" value="UniProtKB-UniRule"/>
</dbReference>
<dbReference type="CDD" id="cd00673">
    <property type="entry name" value="AlaRS_core"/>
    <property type="match status" value="1"/>
</dbReference>
<dbReference type="FunFam" id="2.40.30.130:FF:000001">
    <property type="entry name" value="Alanine--tRNA ligase"/>
    <property type="match status" value="1"/>
</dbReference>
<dbReference type="FunFam" id="3.10.310.40:FF:000001">
    <property type="entry name" value="Alanine--tRNA ligase"/>
    <property type="match status" value="1"/>
</dbReference>
<dbReference type="FunFam" id="3.30.54.20:FF:000001">
    <property type="entry name" value="Alanine--tRNA ligase"/>
    <property type="match status" value="1"/>
</dbReference>
<dbReference type="FunFam" id="3.30.930.10:FF:000004">
    <property type="entry name" value="Alanine--tRNA ligase"/>
    <property type="match status" value="1"/>
</dbReference>
<dbReference type="FunFam" id="3.30.980.10:FF:000004">
    <property type="entry name" value="Alanine--tRNA ligase, cytoplasmic"/>
    <property type="match status" value="1"/>
</dbReference>
<dbReference type="Gene3D" id="2.40.30.130">
    <property type="match status" value="1"/>
</dbReference>
<dbReference type="Gene3D" id="3.10.310.40">
    <property type="match status" value="1"/>
</dbReference>
<dbReference type="Gene3D" id="3.30.54.20">
    <property type="match status" value="1"/>
</dbReference>
<dbReference type="Gene3D" id="6.10.250.550">
    <property type="match status" value="1"/>
</dbReference>
<dbReference type="Gene3D" id="3.30.930.10">
    <property type="entry name" value="Bira Bifunctional Protein, Domain 2"/>
    <property type="match status" value="1"/>
</dbReference>
<dbReference type="Gene3D" id="3.30.980.10">
    <property type="entry name" value="Threonyl-trna Synthetase, Chain A, domain 2"/>
    <property type="match status" value="1"/>
</dbReference>
<dbReference type="HAMAP" id="MF_00036_B">
    <property type="entry name" value="Ala_tRNA_synth_B"/>
    <property type="match status" value="1"/>
</dbReference>
<dbReference type="InterPro" id="IPR006195">
    <property type="entry name" value="aa-tRNA-synth_II"/>
</dbReference>
<dbReference type="InterPro" id="IPR045864">
    <property type="entry name" value="aa-tRNA-synth_II/BPL/LPL"/>
</dbReference>
<dbReference type="InterPro" id="IPR002318">
    <property type="entry name" value="Ala-tRNA-lgiase_IIc"/>
</dbReference>
<dbReference type="InterPro" id="IPR018162">
    <property type="entry name" value="Ala-tRNA-ligase_IIc_anticod-bd"/>
</dbReference>
<dbReference type="InterPro" id="IPR018165">
    <property type="entry name" value="Ala-tRNA-synth_IIc_core"/>
</dbReference>
<dbReference type="InterPro" id="IPR018164">
    <property type="entry name" value="Ala-tRNA-synth_IIc_N"/>
</dbReference>
<dbReference type="InterPro" id="IPR050058">
    <property type="entry name" value="Ala-tRNA_ligase"/>
</dbReference>
<dbReference type="InterPro" id="IPR023033">
    <property type="entry name" value="Ala_tRNA_ligase_euk/bac"/>
</dbReference>
<dbReference type="InterPro" id="IPR003156">
    <property type="entry name" value="DHHA1_dom"/>
</dbReference>
<dbReference type="InterPro" id="IPR018163">
    <property type="entry name" value="Thr/Ala-tRNA-synth_IIc_edit"/>
</dbReference>
<dbReference type="InterPro" id="IPR009000">
    <property type="entry name" value="Transl_B-barrel_sf"/>
</dbReference>
<dbReference type="InterPro" id="IPR012947">
    <property type="entry name" value="tRNA_SAD"/>
</dbReference>
<dbReference type="NCBIfam" id="TIGR00344">
    <property type="entry name" value="alaS"/>
    <property type="match status" value="1"/>
</dbReference>
<dbReference type="PANTHER" id="PTHR11777:SF9">
    <property type="entry name" value="ALANINE--TRNA LIGASE, CYTOPLASMIC"/>
    <property type="match status" value="1"/>
</dbReference>
<dbReference type="PANTHER" id="PTHR11777">
    <property type="entry name" value="ALANYL-TRNA SYNTHETASE"/>
    <property type="match status" value="1"/>
</dbReference>
<dbReference type="Pfam" id="PF02272">
    <property type="entry name" value="DHHA1"/>
    <property type="match status" value="1"/>
</dbReference>
<dbReference type="Pfam" id="PF01411">
    <property type="entry name" value="tRNA-synt_2c"/>
    <property type="match status" value="1"/>
</dbReference>
<dbReference type="Pfam" id="PF07973">
    <property type="entry name" value="tRNA_SAD"/>
    <property type="match status" value="1"/>
</dbReference>
<dbReference type="PRINTS" id="PR00980">
    <property type="entry name" value="TRNASYNTHALA"/>
</dbReference>
<dbReference type="SMART" id="SM00863">
    <property type="entry name" value="tRNA_SAD"/>
    <property type="match status" value="1"/>
</dbReference>
<dbReference type="SUPFAM" id="SSF55681">
    <property type="entry name" value="Class II aaRS and biotin synthetases"/>
    <property type="match status" value="1"/>
</dbReference>
<dbReference type="SUPFAM" id="SSF101353">
    <property type="entry name" value="Putative anticodon-binding domain of alanyl-tRNA synthetase (AlaRS)"/>
    <property type="match status" value="1"/>
</dbReference>
<dbReference type="SUPFAM" id="SSF55186">
    <property type="entry name" value="ThrRS/AlaRS common domain"/>
    <property type="match status" value="1"/>
</dbReference>
<dbReference type="SUPFAM" id="SSF50447">
    <property type="entry name" value="Translation proteins"/>
    <property type="match status" value="1"/>
</dbReference>
<dbReference type="PROSITE" id="PS50860">
    <property type="entry name" value="AA_TRNA_LIGASE_II_ALA"/>
    <property type="match status" value="1"/>
</dbReference>